<proteinExistence type="inferred from homology"/>
<feature type="chain" id="PRO_1000118367" description="ATP-dependent Clp protease ATP-binding subunit ClpX">
    <location>
        <begin position="1"/>
        <end position="424"/>
    </location>
</feature>
<feature type="domain" description="ClpX-type ZB" evidence="2">
    <location>
        <begin position="2"/>
        <end position="56"/>
    </location>
</feature>
<feature type="binding site" evidence="2">
    <location>
        <position position="15"/>
    </location>
    <ligand>
        <name>Zn(2+)</name>
        <dbReference type="ChEBI" id="CHEBI:29105"/>
    </ligand>
</feature>
<feature type="binding site" evidence="2">
    <location>
        <position position="18"/>
    </location>
    <ligand>
        <name>Zn(2+)</name>
        <dbReference type="ChEBI" id="CHEBI:29105"/>
    </ligand>
</feature>
<feature type="binding site" evidence="2">
    <location>
        <position position="37"/>
    </location>
    <ligand>
        <name>Zn(2+)</name>
        <dbReference type="ChEBI" id="CHEBI:29105"/>
    </ligand>
</feature>
<feature type="binding site" evidence="2">
    <location>
        <position position="40"/>
    </location>
    <ligand>
        <name>Zn(2+)</name>
        <dbReference type="ChEBI" id="CHEBI:29105"/>
    </ligand>
</feature>
<feature type="binding site" evidence="1">
    <location>
        <begin position="120"/>
        <end position="127"/>
    </location>
    <ligand>
        <name>ATP</name>
        <dbReference type="ChEBI" id="CHEBI:30616"/>
    </ligand>
</feature>
<sequence length="424" mass="46356">MTDKRKDGSGKLLYCSFCGKSQHEVRKLIAGPSVYICDECVDLCNDIIREEIKEVAPHRERSALPTPHEIRNHLDDYVIGQEQAKKVLAVAVYNHYKRLRNGDTSNGVELGKSNILLIGPTGSGKTLLAETLARLLDVPFTMADATTLTEAGYVGEDVENIIQKLLQKCDYDVQKAQRGIVYIDEIDKISRKSDNPSITRDVSGEGVQQALLKLIEGTVAAVPPQGGRKHPQQEFLQVDTSKILFICGGAFAGLDKVISHRVETGSGIGFGATVKAKSDKASEGELLAQVEPEDLIKFGLIPEFIGRLPVVATLNELSEEALIQILKEPKNALTKQYQALFNLEGVDLEFRDEALDAIAKKAMARKTGARGLRSIVEAALLDTMYDLPSMEDVEKVVIDESVIDGQSKPLLIYGKPEAQQASGE</sequence>
<reference key="1">
    <citation type="journal article" date="2009" name="PLoS Genet.">
        <title>Organised genome dynamics in the Escherichia coli species results in highly diverse adaptive paths.</title>
        <authorList>
            <person name="Touchon M."/>
            <person name="Hoede C."/>
            <person name="Tenaillon O."/>
            <person name="Barbe V."/>
            <person name="Baeriswyl S."/>
            <person name="Bidet P."/>
            <person name="Bingen E."/>
            <person name="Bonacorsi S."/>
            <person name="Bouchier C."/>
            <person name="Bouvet O."/>
            <person name="Calteau A."/>
            <person name="Chiapello H."/>
            <person name="Clermont O."/>
            <person name="Cruveiller S."/>
            <person name="Danchin A."/>
            <person name="Diard M."/>
            <person name="Dossat C."/>
            <person name="Karoui M.E."/>
            <person name="Frapy E."/>
            <person name="Garry L."/>
            <person name="Ghigo J.M."/>
            <person name="Gilles A.M."/>
            <person name="Johnson J."/>
            <person name="Le Bouguenec C."/>
            <person name="Lescat M."/>
            <person name="Mangenot S."/>
            <person name="Martinez-Jehanne V."/>
            <person name="Matic I."/>
            <person name="Nassif X."/>
            <person name="Oztas S."/>
            <person name="Petit M.A."/>
            <person name="Pichon C."/>
            <person name="Rouy Z."/>
            <person name="Ruf C.S."/>
            <person name="Schneider D."/>
            <person name="Tourret J."/>
            <person name="Vacherie B."/>
            <person name="Vallenet D."/>
            <person name="Medigue C."/>
            <person name="Rocha E.P.C."/>
            <person name="Denamur E."/>
        </authorList>
    </citation>
    <scope>NUCLEOTIDE SEQUENCE [LARGE SCALE GENOMIC DNA]</scope>
    <source>
        <strain>IAI39 / ExPEC</strain>
    </source>
</reference>
<keyword id="KW-0067">ATP-binding</keyword>
<keyword id="KW-0143">Chaperone</keyword>
<keyword id="KW-0479">Metal-binding</keyword>
<keyword id="KW-0547">Nucleotide-binding</keyword>
<keyword id="KW-0862">Zinc</keyword>
<name>CLPX_ECO7I</name>
<organism>
    <name type="scientific">Escherichia coli O7:K1 (strain IAI39 / ExPEC)</name>
    <dbReference type="NCBI Taxonomy" id="585057"/>
    <lineage>
        <taxon>Bacteria</taxon>
        <taxon>Pseudomonadati</taxon>
        <taxon>Pseudomonadota</taxon>
        <taxon>Gammaproteobacteria</taxon>
        <taxon>Enterobacterales</taxon>
        <taxon>Enterobacteriaceae</taxon>
        <taxon>Escherichia</taxon>
    </lineage>
</organism>
<accession>B7NJ56</accession>
<gene>
    <name evidence="1" type="primary">clpX</name>
    <name type="ordered locus">ECIAI39_0235</name>
</gene>
<dbReference type="EMBL" id="CU928164">
    <property type="protein sequence ID" value="CAR16375.1"/>
    <property type="molecule type" value="Genomic_DNA"/>
</dbReference>
<dbReference type="RefSeq" id="WP_000130305.1">
    <property type="nucleotide sequence ID" value="NC_011750.1"/>
</dbReference>
<dbReference type="RefSeq" id="YP_002406279.1">
    <property type="nucleotide sequence ID" value="NC_011750.1"/>
</dbReference>
<dbReference type="SMR" id="B7NJ56"/>
<dbReference type="STRING" id="585057.ECIAI39_0235"/>
<dbReference type="GeneID" id="93777016"/>
<dbReference type="KEGG" id="ect:ECIAI39_0235"/>
<dbReference type="PATRIC" id="fig|585057.6.peg.253"/>
<dbReference type="HOGENOM" id="CLU_014218_8_2_6"/>
<dbReference type="Proteomes" id="UP000000749">
    <property type="component" value="Chromosome"/>
</dbReference>
<dbReference type="GO" id="GO:0009376">
    <property type="term" value="C:HslUV protease complex"/>
    <property type="evidence" value="ECO:0007669"/>
    <property type="project" value="TreeGrafter"/>
</dbReference>
<dbReference type="GO" id="GO:0005524">
    <property type="term" value="F:ATP binding"/>
    <property type="evidence" value="ECO:0007669"/>
    <property type="project" value="UniProtKB-UniRule"/>
</dbReference>
<dbReference type="GO" id="GO:0016887">
    <property type="term" value="F:ATP hydrolysis activity"/>
    <property type="evidence" value="ECO:0007669"/>
    <property type="project" value="InterPro"/>
</dbReference>
<dbReference type="GO" id="GO:0140662">
    <property type="term" value="F:ATP-dependent protein folding chaperone"/>
    <property type="evidence" value="ECO:0007669"/>
    <property type="project" value="InterPro"/>
</dbReference>
<dbReference type="GO" id="GO:0046983">
    <property type="term" value="F:protein dimerization activity"/>
    <property type="evidence" value="ECO:0007669"/>
    <property type="project" value="InterPro"/>
</dbReference>
<dbReference type="GO" id="GO:0051082">
    <property type="term" value="F:unfolded protein binding"/>
    <property type="evidence" value="ECO:0007669"/>
    <property type="project" value="UniProtKB-UniRule"/>
</dbReference>
<dbReference type="GO" id="GO:0008270">
    <property type="term" value="F:zinc ion binding"/>
    <property type="evidence" value="ECO:0007669"/>
    <property type="project" value="InterPro"/>
</dbReference>
<dbReference type="GO" id="GO:0051301">
    <property type="term" value="P:cell division"/>
    <property type="evidence" value="ECO:0007669"/>
    <property type="project" value="TreeGrafter"/>
</dbReference>
<dbReference type="GO" id="GO:0051603">
    <property type="term" value="P:proteolysis involved in protein catabolic process"/>
    <property type="evidence" value="ECO:0007669"/>
    <property type="project" value="TreeGrafter"/>
</dbReference>
<dbReference type="CDD" id="cd19497">
    <property type="entry name" value="RecA-like_ClpX"/>
    <property type="match status" value="1"/>
</dbReference>
<dbReference type="FunFam" id="1.10.8.60:FF:000002">
    <property type="entry name" value="ATP-dependent Clp protease ATP-binding subunit ClpX"/>
    <property type="match status" value="1"/>
</dbReference>
<dbReference type="FunFam" id="3.40.50.300:FF:000005">
    <property type="entry name" value="ATP-dependent Clp protease ATP-binding subunit ClpX"/>
    <property type="match status" value="1"/>
</dbReference>
<dbReference type="Gene3D" id="1.10.8.60">
    <property type="match status" value="1"/>
</dbReference>
<dbReference type="Gene3D" id="6.20.220.10">
    <property type="entry name" value="ClpX chaperone, C4-type zinc finger domain"/>
    <property type="match status" value="1"/>
</dbReference>
<dbReference type="Gene3D" id="3.40.50.300">
    <property type="entry name" value="P-loop containing nucleotide triphosphate hydrolases"/>
    <property type="match status" value="1"/>
</dbReference>
<dbReference type="HAMAP" id="MF_00175">
    <property type="entry name" value="ClpX"/>
    <property type="match status" value="1"/>
</dbReference>
<dbReference type="InterPro" id="IPR003593">
    <property type="entry name" value="AAA+_ATPase"/>
</dbReference>
<dbReference type="InterPro" id="IPR050052">
    <property type="entry name" value="ATP-dep_Clp_protease_ClpX"/>
</dbReference>
<dbReference type="InterPro" id="IPR003959">
    <property type="entry name" value="ATPase_AAA_core"/>
</dbReference>
<dbReference type="InterPro" id="IPR019489">
    <property type="entry name" value="Clp_ATPase_C"/>
</dbReference>
<dbReference type="InterPro" id="IPR004487">
    <property type="entry name" value="Clp_protease_ATP-bd_su_ClpX"/>
</dbReference>
<dbReference type="InterPro" id="IPR046425">
    <property type="entry name" value="ClpX_bact"/>
</dbReference>
<dbReference type="InterPro" id="IPR027417">
    <property type="entry name" value="P-loop_NTPase"/>
</dbReference>
<dbReference type="InterPro" id="IPR010603">
    <property type="entry name" value="Znf_CppX_C4"/>
</dbReference>
<dbReference type="InterPro" id="IPR038366">
    <property type="entry name" value="Znf_CppX_C4_sf"/>
</dbReference>
<dbReference type="NCBIfam" id="TIGR00382">
    <property type="entry name" value="clpX"/>
    <property type="match status" value="1"/>
</dbReference>
<dbReference type="NCBIfam" id="NF003745">
    <property type="entry name" value="PRK05342.1"/>
    <property type="match status" value="1"/>
</dbReference>
<dbReference type="PANTHER" id="PTHR48102:SF7">
    <property type="entry name" value="ATP-DEPENDENT CLP PROTEASE ATP-BINDING SUBUNIT CLPX-LIKE, MITOCHONDRIAL"/>
    <property type="match status" value="1"/>
</dbReference>
<dbReference type="PANTHER" id="PTHR48102">
    <property type="entry name" value="ATP-DEPENDENT CLP PROTEASE ATP-BINDING SUBUNIT CLPX-LIKE, MITOCHONDRIAL-RELATED"/>
    <property type="match status" value="1"/>
</dbReference>
<dbReference type="Pfam" id="PF07724">
    <property type="entry name" value="AAA_2"/>
    <property type="match status" value="1"/>
</dbReference>
<dbReference type="Pfam" id="PF10431">
    <property type="entry name" value="ClpB_D2-small"/>
    <property type="match status" value="1"/>
</dbReference>
<dbReference type="Pfam" id="PF06689">
    <property type="entry name" value="zf-C4_ClpX"/>
    <property type="match status" value="1"/>
</dbReference>
<dbReference type="SMART" id="SM00382">
    <property type="entry name" value="AAA"/>
    <property type="match status" value="1"/>
</dbReference>
<dbReference type="SMART" id="SM01086">
    <property type="entry name" value="ClpB_D2-small"/>
    <property type="match status" value="1"/>
</dbReference>
<dbReference type="SMART" id="SM00994">
    <property type="entry name" value="zf-C4_ClpX"/>
    <property type="match status" value="1"/>
</dbReference>
<dbReference type="SUPFAM" id="SSF57716">
    <property type="entry name" value="Glucocorticoid receptor-like (DNA-binding domain)"/>
    <property type="match status" value="1"/>
</dbReference>
<dbReference type="SUPFAM" id="SSF52540">
    <property type="entry name" value="P-loop containing nucleoside triphosphate hydrolases"/>
    <property type="match status" value="1"/>
</dbReference>
<dbReference type="PROSITE" id="PS51902">
    <property type="entry name" value="CLPX_ZB"/>
    <property type="match status" value="1"/>
</dbReference>
<comment type="function">
    <text evidence="1">ATP-dependent specificity component of the Clp protease. It directs the protease to specific substrates. Can perform chaperone functions in the absence of ClpP.</text>
</comment>
<comment type="subunit">
    <text evidence="1">Component of the ClpX-ClpP complex. Forms a hexameric ring that, in the presence of ATP, binds to fourteen ClpP subunits assembled into a disk-like structure with a central cavity, resembling the structure of eukaryotic proteasomes.</text>
</comment>
<comment type="similarity">
    <text evidence="1">Belongs to the ClpX chaperone family.</text>
</comment>
<protein>
    <recommendedName>
        <fullName evidence="1">ATP-dependent Clp protease ATP-binding subunit ClpX</fullName>
    </recommendedName>
</protein>
<evidence type="ECO:0000255" key="1">
    <source>
        <dbReference type="HAMAP-Rule" id="MF_00175"/>
    </source>
</evidence>
<evidence type="ECO:0000255" key="2">
    <source>
        <dbReference type="PROSITE-ProRule" id="PRU01250"/>
    </source>
</evidence>